<comment type="catalytic activity">
    <reaction>
        <text>an acyl phosphate + H2O = a carboxylate + phosphate + H(+)</text>
        <dbReference type="Rhea" id="RHEA:14965"/>
        <dbReference type="ChEBI" id="CHEBI:15377"/>
        <dbReference type="ChEBI" id="CHEBI:15378"/>
        <dbReference type="ChEBI" id="CHEBI:29067"/>
        <dbReference type="ChEBI" id="CHEBI:43474"/>
        <dbReference type="ChEBI" id="CHEBI:59918"/>
        <dbReference type="EC" id="3.6.1.7"/>
    </reaction>
</comment>
<comment type="similarity">
    <text evidence="2">Belongs to the acylphosphatase family.</text>
</comment>
<evidence type="ECO:0000255" key="1">
    <source>
        <dbReference type="PROSITE-ProRule" id="PRU00520"/>
    </source>
</evidence>
<evidence type="ECO:0000305" key="2"/>
<organism>
    <name type="scientific">Nocardia farcinica (strain IFM 10152)</name>
    <dbReference type="NCBI Taxonomy" id="247156"/>
    <lineage>
        <taxon>Bacteria</taxon>
        <taxon>Bacillati</taxon>
        <taxon>Actinomycetota</taxon>
        <taxon>Actinomycetes</taxon>
        <taxon>Mycobacteriales</taxon>
        <taxon>Nocardiaceae</taxon>
        <taxon>Nocardia</taxon>
    </lineage>
</organism>
<accession>Q5YS19</accession>
<protein>
    <recommendedName>
        <fullName>Acylphosphatase</fullName>
        <ecNumber>3.6.1.7</ecNumber>
    </recommendedName>
    <alternativeName>
        <fullName>Acylphosphate phosphohydrolase</fullName>
    </alternativeName>
</protein>
<name>ACYP_NOCFA</name>
<gene>
    <name type="primary">acyP</name>
    <name type="ordered locus">NFA_41730</name>
</gene>
<dbReference type="EC" id="3.6.1.7"/>
<dbReference type="EMBL" id="AP006618">
    <property type="protein sequence ID" value="BAD59022.1"/>
    <property type="molecule type" value="Genomic_DNA"/>
</dbReference>
<dbReference type="RefSeq" id="WP_011210707.1">
    <property type="nucleotide sequence ID" value="NC_006361.1"/>
</dbReference>
<dbReference type="SMR" id="Q5YS19"/>
<dbReference type="STRING" id="247156.NFA_41730"/>
<dbReference type="GeneID" id="61134809"/>
<dbReference type="KEGG" id="nfa:NFA_41730"/>
<dbReference type="eggNOG" id="COG1254">
    <property type="taxonomic scope" value="Bacteria"/>
</dbReference>
<dbReference type="HOGENOM" id="CLU_141932_3_0_11"/>
<dbReference type="OrthoDB" id="3182027at2"/>
<dbReference type="Proteomes" id="UP000006820">
    <property type="component" value="Chromosome"/>
</dbReference>
<dbReference type="GO" id="GO:0003998">
    <property type="term" value="F:acylphosphatase activity"/>
    <property type="evidence" value="ECO:0007669"/>
    <property type="project" value="UniProtKB-EC"/>
</dbReference>
<dbReference type="Gene3D" id="3.30.70.100">
    <property type="match status" value="1"/>
</dbReference>
<dbReference type="InterPro" id="IPR020456">
    <property type="entry name" value="Acylphosphatase"/>
</dbReference>
<dbReference type="InterPro" id="IPR001792">
    <property type="entry name" value="Acylphosphatase-like_dom"/>
</dbReference>
<dbReference type="InterPro" id="IPR036046">
    <property type="entry name" value="Acylphosphatase-like_dom_sf"/>
</dbReference>
<dbReference type="InterPro" id="IPR017968">
    <property type="entry name" value="Acylphosphatase_CS"/>
</dbReference>
<dbReference type="NCBIfam" id="NF010997">
    <property type="entry name" value="PRK14422.1"/>
    <property type="match status" value="1"/>
</dbReference>
<dbReference type="PANTHER" id="PTHR47268">
    <property type="entry name" value="ACYLPHOSPHATASE"/>
    <property type="match status" value="1"/>
</dbReference>
<dbReference type="PANTHER" id="PTHR47268:SF4">
    <property type="entry name" value="ACYLPHOSPHATASE"/>
    <property type="match status" value="1"/>
</dbReference>
<dbReference type="Pfam" id="PF00708">
    <property type="entry name" value="Acylphosphatase"/>
    <property type="match status" value="1"/>
</dbReference>
<dbReference type="SUPFAM" id="SSF54975">
    <property type="entry name" value="Acylphosphatase/BLUF domain-like"/>
    <property type="match status" value="1"/>
</dbReference>
<dbReference type="PROSITE" id="PS00150">
    <property type="entry name" value="ACYLPHOSPHATASE_1"/>
    <property type="match status" value="1"/>
</dbReference>
<dbReference type="PROSITE" id="PS00151">
    <property type="entry name" value="ACYLPHOSPHATASE_2"/>
    <property type="match status" value="1"/>
</dbReference>
<dbReference type="PROSITE" id="PS51160">
    <property type="entry name" value="ACYLPHOSPHATASE_3"/>
    <property type="match status" value="1"/>
</dbReference>
<feature type="chain" id="PRO_0000326760" description="Acylphosphatase">
    <location>
        <begin position="1"/>
        <end position="100"/>
    </location>
</feature>
<feature type="domain" description="Acylphosphatase-like" evidence="1">
    <location>
        <begin position="14"/>
        <end position="100"/>
    </location>
</feature>
<feature type="active site" evidence="1">
    <location>
        <position position="29"/>
    </location>
</feature>
<feature type="active site" evidence="1">
    <location>
        <position position="47"/>
    </location>
</feature>
<sequence>MSESPHDHAGDPVRLSAWVHGHVQGVGFRWWTRSRALESGLTGYARNAPDGRVHVIAEGPRERCERLLELLRSGTTPGRVSLVVESWEPARGDLTGFEER</sequence>
<proteinExistence type="inferred from homology"/>
<reference key="1">
    <citation type="journal article" date="2004" name="Proc. Natl. Acad. Sci. U.S.A.">
        <title>The complete genomic sequence of Nocardia farcinica IFM 10152.</title>
        <authorList>
            <person name="Ishikawa J."/>
            <person name="Yamashita A."/>
            <person name="Mikami Y."/>
            <person name="Hoshino Y."/>
            <person name="Kurita H."/>
            <person name="Hotta K."/>
            <person name="Shiba T."/>
            <person name="Hattori M."/>
        </authorList>
    </citation>
    <scope>NUCLEOTIDE SEQUENCE [LARGE SCALE GENOMIC DNA]</scope>
    <source>
        <strain>IFM 10152</strain>
    </source>
</reference>
<keyword id="KW-0378">Hydrolase</keyword>
<keyword id="KW-1185">Reference proteome</keyword>